<dbReference type="EMBL" id="X83690">
    <property type="protein sequence ID" value="CAA58660.1"/>
    <property type="status" value="ALT_SEQ"/>
    <property type="molecule type" value="Genomic_DNA"/>
</dbReference>
<dbReference type="EMBL" id="X83690">
    <property type="protein sequence ID" value="CAA58663.1"/>
    <property type="status" value="ALT_SEQ"/>
    <property type="molecule type" value="Genomic_DNA"/>
</dbReference>
<dbReference type="EMBL" id="Z72700">
    <property type="protein sequence ID" value="CAA96889.1"/>
    <property type="molecule type" value="Genomic_DNA"/>
</dbReference>
<dbReference type="EMBL" id="D25541">
    <property type="protein sequence ID" value="BAA05024.1"/>
    <property type="status" value="ALT_SEQ"/>
    <property type="molecule type" value="Genomic_DNA"/>
</dbReference>
<dbReference type="EMBL" id="D26184">
    <property type="protein sequence ID" value="BAA05172.1"/>
    <property type="status" value="ALT_SEQ"/>
    <property type="molecule type" value="Genomic_DNA"/>
</dbReference>
<dbReference type="EMBL" id="BK006941">
    <property type="protein sequence ID" value="DAA07936.1"/>
    <property type="molecule type" value="Genomic_DNA"/>
</dbReference>
<dbReference type="PIR" id="S64195">
    <property type="entry name" value="S64195"/>
</dbReference>
<dbReference type="RefSeq" id="NP_011337.1">
    <property type="nucleotide sequence ID" value="NM_001181043.1"/>
</dbReference>
<dbReference type="PDB" id="5BYM">
    <property type="method" value="X-ray"/>
    <property type="resolution" value="2.71 A"/>
    <property type="chains" value="A=201-600"/>
</dbReference>
<dbReference type="PDB" id="5BZ1">
    <property type="method" value="X-ray"/>
    <property type="resolution" value="2.15 A"/>
    <property type="chains" value="A=201-600"/>
</dbReference>
<dbReference type="PDB" id="5BZ5">
    <property type="method" value="X-ray"/>
    <property type="resolution" value="2.80 A"/>
    <property type="chains" value="A=201-600"/>
</dbReference>
<dbReference type="PDB" id="5BZU">
    <property type="method" value="X-ray"/>
    <property type="resolution" value="2.50 A"/>
    <property type="chains" value="A=201-600"/>
</dbReference>
<dbReference type="PDB" id="5BZV">
    <property type="method" value="X-ray"/>
    <property type="resolution" value="2.35 A"/>
    <property type="chains" value="A=201-600"/>
</dbReference>
<dbReference type="PDBsum" id="5BYM"/>
<dbReference type="PDBsum" id="5BZ1"/>
<dbReference type="PDBsum" id="5BZ5"/>
<dbReference type="PDBsum" id="5BZU"/>
<dbReference type="PDBsum" id="5BZV"/>
<dbReference type="SMR" id="P39016"/>
<dbReference type="BioGRID" id="33076">
    <property type="interactions" value="1856"/>
</dbReference>
<dbReference type="DIP" id="DIP-2271N"/>
<dbReference type="FunCoup" id="P39016">
    <property type="interactions" value="114"/>
</dbReference>
<dbReference type="IntAct" id="P39016">
    <property type="interactions" value="33"/>
</dbReference>
<dbReference type="MINT" id="P39016"/>
<dbReference type="STRING" id="4932.YGL178W"/>
<dbReference type="GlyGen" id="P39016">
    <property type="glycosylation" value="4 sites, 1 O-linked glycan (2 sites)"/>
</dbReference>
<dbReference type="iPTMnet" id="P39016"/>
<dbReference type="PaxDb" id="4932-YGL178W"/>
<dbReference type="PeptideAtlas" id="P39016"/>
<dbReference type="EnsemblFungi" id="YGL178W_mRNA">
    <property type="protein sequence ID" value="YGL178W"/>
    <property type="gene ID" value="YGL178W"/>
</dbReference>
<dbReference type="GeneID" id="852697"/>
<dbReference type="KEGG" id="sce:YGL178W"/>
<dbReference type="AGR" id="SGD:S000003146"/>
<dbReference type="SGD" id="S000003146">
    <property type="gene designation" value="MPT5"/>
</dbReference>
<dbReference type="VEuPathDB" id="FungiDB:YGL178W"/>
<dbReference type="eggNOG" id="KOG2049">
    <property type="taxonomic scope" value="Eukaryota"/>
</dbReference>
<dbReference type="HOGENOM" id="CLU_017863_0_0_1"/>
<dbReference type="InParanoid" id="P39016"/>
<dbReference type="OMA" id="PPLGQMN"/>
<dbReference type="OrthoDB" id="668540at2759"/>
<dbReference type="BioCyc" id="YEAST:G3O-30665-MONOMER"/>
<dbReference type="BioGRID-ORCS" id="852697">
    <property type="hits" value="0 hits in 10 CRISPR screens"/>
</dbReference>
<dbReference type="EvolutionaryTrace" id="P39016"/>
<dbReference type="PRO" id="PR:P39016"/>
<dbReference type="Proteomes" id="UP000002311">
    <property type="component" value="Chromosome VII"/>
</dbReference>
<dbReference type="RNAct" id="P39016">
    <property type="molecule type" value="protein"/>
</dbReference>
<dbReference type="GO" id="GO:0005737">
    <property type="term" value="C:cytoplasm"/>
    <property type="evidence" value="ECO:0000314"/>
    <property type="project" value="SGD"/>
</dbReference>
<dbReference type="GO" id="GO:0003729">
    <property type="term" value="F:mRNA binding"/>
    <property type="evidence" value="ECO:0000314"/>
    <property type="project" value="SGD"/>
</dbReference>
<dbReference type="GO" id="GO:0030674">
    <property type="term" value="F:protein-macromolecule adaptor activity"/>
    <property type="evidence" value="ECO:0000353"/>
    <property type="project" value="SGD"/>
</dbReference>
<dbReference type="GO" id="GO:0008298">
    <property type="term" value="P:intracellular mRNA localization"/>
    <property type="evidence" value="ECO:0000315"/>
    <property type="project" value="SGD"/>
</dbReference>
<dbReference type="GO" id="GO:0017148">
    <property type="term" value="P:negative regulation of translation"/>
    <property type="evidence" value="ECO:0000314"/>
    <property type="project" value="SGD"/>
</dbReference>
<dbReference type="GO" id="GO:0045947">
    <property type="term" value="P:negative regulation of translational initiation"/>
    <property type="evidence" value="ECO:0000353"/>
    <property type="project" value="SGD"/>
</dbReference>
<dbReference type="GO" id="GO:1900153">
    <property type="term" value="P:positive regulation of nuclear-transcribed mRNA catabolic process, deadenylation-dependent decay"/>
    <property type="evidence" value="ECO:0000314"/>
    <property type="project" value="SGD"/>
</dbReference>
<dbReference type="GO" id="GO:0010608">
    <property type="term" value="P:post-transcriptional regulation of gene expression"/>
    <property type="evidence" value="ECO:0000318"/>
    <property type="project" value="GO_Central"/>
</dbReference>
<dbReference type="GO" id="GO:1903450">
    <property type="term" value="P:regulation of G1 to G0 transition"/>
    <property type="evidence" value="ECO:0000315"/>
    <property type="project" value="SGD"/>
</dbReference>
<dbReference type="CDD" id="cd07920">
    <property type="entry name" value="Pumilio"/>
    <property type="match status" value="1"/>
</dbReference>
<dbReference type="FunFam" id="1.25.10.10:FF:000763">
    <property type="entry name" value="Suppressor protein MPT5"/>
    <property type="match status" value="1"/>
</dbReference>
<dbReference type="Gene3D" id="1.25.10.10">
    <property type="entry name" value="Leucine-rich Repeat Variant"/>
    <property type="match status" value="1"/>
</dbReference>
<dbReference type="InterPro" id="IPR011989">
    <property type="entry name" value="ARM-like"/>
</dbReference>
<dbReference type="InterPro" id="IPR016024">
    <property type="entry name" value="ARM-type_fold"/>
</dbReference>
<dbReference type="InterPro" id="IPR033133">
    <property type="entry name" value="PUM-HD"/>
</dbReference>
<dbReference type="InterPro" id="IPR033712">
    <property type="entry name" value="Pumilio_RNA-bd"/>
</dbReference>
<dbReference type="InterPro" id="IPR001313">
    <property type="entry name" value="Pumilio_RNA-bd_rpt"/>
</dbReference>
<dbReference type="PANTHER" id="PTHR12537">
    <property type="entry name" value="RNA BINDING PROTEIN PUMILIO-RELATED"/>
    <property type="match status" value="1"/>
</dbReference>
<dbReference type="PANTHER" id="PTHR12537:SF80">
    <property type="entry name" value="SUPPRESSOR PROTEIN MPT5"/>
    <property type="match status" value="1"/>
</dbReference>
<dbReference type="Pfam" id="PF00806">
    <property type="entry name" value="PUF"/>
    <property type="match status" value="6"/>
</dbReference>
<dbReference type="SMART" id="SM00025">
    <property type="entry name" value="Pumilio"/>
    <property type="match status" value="8"/>
</dbReference>
<dbReference type="SUPFAM" id="SSF48371">
    <property type="entry name" value="ARM repeat"/>
    <property type="match status" value="1"/>
</dbReference>
<dbReference type="PROSITE" id="PS50302">
    <property type="entry name" value="PUM"/>
    <property type="match status" value="8"/>
</dbReference>
<dbReference type="PROSITE" id="PS50303">
    <property type="entry name" value="PUM_HD"/>
    <property type="match status" value="1"/>
</dbReference>
<keyword id="KW-0002">3D-structure</keyword>
<keyword id="KW-0963">Cytoplasm</keyword>
<keyword id="KW-0597">Phosphoprotein</keyword>
<keyword id="KW-1185">Reference proteome</keyword>
<keyword id="KW-0677">Repeat</keyword>
<keyword id="KW-0694">RNA-binding</keyword>
<name>MPT5_YEAST</name>
<accession>P39016</accession>
<accession>D6VTX5</accession>
<sequence>MINNEPFPSADSASILTTSTSNNSLMSYNHQPQLSINSVQSLLEPVTPPPLGQMNNKRNHQKAHSLDLSGFNQFISSTQSPLALMNNTSTSNSANSFSPNPNAASNSTGLSASMANPPAILPLINEFDLEMDGPRRKSSHDFTVVAPSNSGVNTSSLIMETPSSSVTPAASLRNFSNSNNAASKCGVDNSSFGLSSSTSSSMVEISALPLRDLDYIKLATDQFGCRFLQKKLETPSESNMVRDLMYEQIKPFFLDLILDPFGNYLVQKLCDYLTAEQKTLLIQTIYPNVFQISINQYGTRSLQKIIDTVDNEVQIDLIIKGFSQEFTSIEQVVTLINDLNGNHVIQKCIFKFSPSKFGFIIDAIVEQNNIITISTHKHGCCVLQKLLSVCTLQQIFKISVKIVQFLPGLINDQFGNYIIQFLLDIKELDFYLLAELFNRLSNELCQLSCLKFSSNVVEKFIKKLFRIITGFIVNNNGGASQRTAVASDDVINASMNILLTTIDIFTVNLNVLIRDNFGNYALQTLLDVKNYSPLLAYNKNSNAIGQNSSSTLNYGNFCNDFSLKIGNLIVLTKELLPSIKTTSYAKKIKLKVKAYAEATGIPFTDISPQVTAMSHNNLQTINNENKNPHNKNSHNHNHNHNHNHAHNNNNNNNQKSHTRHFSLPANAYHRRSNSSVTNNFSNQYAQDQKIHSPQQIMNFNQNAYPSMGAPSFNSQTNPPLVSHNSLQNFDNRQFANLMAHPNSAAPIHSFSSSNITNVNPNVSRGFKQPGFMMNETDKINANHFSPYSNANSQNFNESFVPRMQYQTEGANWDSSLSMKSQHIGQGPYNQVNMSRNASISNMPAMNTARTSDELQFTLP</sequence>
<protein>
    <recommendedName>
        <fullName>Suppressor protein MPT5</fullName>
    </recommendedName>
    <alternativeName>
        <fullName>Protein HTR1</fullName>
    </alternativeName>
    <alternativeName>
        <fullName>Pumilio homology domain family member 5</fullName>
    </alternativeName>
</protein>
<comment type="function">
    <text evidence="3">RNA-binding protein involved in post-transcriptional regulation. Negatively regulates expression of HO by binding to the 3'-UTR of HO mRNA. Predominantly binds to mRNAs encoding chromatin modifiers and spindle pole body components. Recognizes and binds to 5'-TGTAA[CT]A[AT]TA-3' in the 3'-UTR of target mRNAs. Multicopy suppressor of POP2 mutation. Required for high temperature growth.</text>
</comment>
<comment type="interaction">
    <interactant intactId="EBI-2052996">
        <id>P39016</id>
    </interactant>
    <interactant intactId="EBI-4396">
        <id>P31384</id>
        <label>CCR4</label>
    </interactant>
    <organismsDiffer>false</organismsDiffer>
    <experiments>2</experiments>
</comment>
<comment type="interaction">
    <interactant intactId="EBI-2052996">
        <id>P39016</id>
    </interactant>
    <interactant intactId="EBI-158">
        <id>P39517</id>
        <label>DHH1</label>
    </interactant>
    <organismsDiffer>false</organismsDiffer>
    <experiments>3</experiments>
</comment>
<comment type="interaction">
    <interactant intactId="EBI-2052996">
        <id>P39016</id>
    </interactant>
    <interactant intactId="EBI-13629">
        <id>P39008</id>
        <label>POP2</label>
    </interactant>
    <organismsDiffer>false</organismsDiffer>
    <experiments>4</experiments>
</comment>
<comment type="subcellular location">
    <subcellularLocation>
        <location evidence="5">Cytoplasm</location>
    </subcellularLocation>
</comment>
<comment type="miscellaneous">
    <text evidence="4">Present with 1240 molecules/cell in log phase SD medium.</text>
</comment>
<comment type="sequence caution" evidence="6">
    <conflict type="erroneous gene model prediction">
        <sequence resource="EMBL-CDS" id="BAA05024"/>
    </conflict>
</comment>
<comment type="sequence caution" evidence="6">
    <conflict type="erroneous gene model prediction">
        <sequence resource="EMBL-CDS" id="BAA05172"/>
    </conflict>
</comment>
<comment type="sequence caution" evidence="6">
    <conflict type="erroneous gene model prediction">
        <sequence resource="EMBL-CDS" id="CAA58660"/>
    </conflict>
</comment>
<comment type="sequence caution" evidence="6">
    <conflict type="erroneous gene model prediction">
        <sequence resource="EMBL-CDS" id="CAA58663"/>
    </conflict>
</comment>
<organism>
    <name type="scientific">Saccharomyces cerevisiae (strain ATCC 204508 / S288c)</name>
    <name type="common">Baker's yeast</name>
    <dbReference type="NCBI Taxonomy" id="559292"/>
    <lineage>
        <taxon>Eukaryota</taxon>
        <taxon>Fungi</taxon>
        <taxon>Dikarya</taxon>
        <taxon>Ascomycota</taxon>
        <taxon>Saccharomycotina</taxon>
        <taxon>Saccharomycetes</taxon>
        <taxon>Saccharomycetales</taxon>
        <taxon>Saccharomycetaceae</taxon>
        <taxon>Saccharomyces</taxon>
    </lineage>
</organism>
<feature type="chain" id="PRO_0000075923" description="Suppressor protein MPT5">
    <location>
        <begin position="1"/>
        <end position="859"/>
    </location>
</feature>
<feature type="domain" description="PUM-HD" evidence="1">
    <location>
        <begin position="188"/>
        <end position="596"/>
    </location>
</feature>
<feature type="repeat" description="Pumilio 1">
    <location>
        <begin position="209"/>
        <end position="247"/>
    </location>
</feature>
<feature type="repeat" description="Pumilio 2">
    <location>
        <begin position="248"/>
        <end position="283"/>
    </location>
</feature>
<feature type="repeat" description="Pumilio 3">
    <location>
        <begin position="284"/>
        <end position="320"/>
    </location>
</feature>
<feature type="repeat" description="Pumilio 4">
    <location>
        <begin position="325"/>
        <end position="362"/>
    </location>
</feature>
<feature type="repeat" description="Pumilio 5">
    <location>
        <begin position="363"/>
        <end position="400"/>
    </location>
</feature>
<feature type="repeat" description="Pumilio 6">
    <location>
        <begin position="401"/>
        <end position="438"/>
    </location>
</feature>
<feature type="repeat" description="Pumilio 7">
    <location>
        <begin position="439"/>
        <end position="474"/>
    </location>
</feature>
<feature type="repeat" description="Pumilio 8">
    <location>
        <begin position="503"/>
        <end position="539"/>
    </location>
</feature>
<feature type="region of interest" description="Disordered" evidence="2">
    <location>
        <begin position="85"/>
        <end position="108"/>
    </location>
</feature>
<feature type="region of interest" description="Disordered" evidence="2">
    <location>
        <begin position="620"/>
        <end position="658"/>
    </location>
</feature>
<feature type="compositionally biased region" description="Low complexity" evidence="2">
    <location>
        <begin position="86"/>
        <end position="108"/>
    </location>
</feature>
<feature type="compositionally biased region" description="Basic residues" evidence="2">
    <location>
        <begin position="628"/>
        <end position="645"/>
    </location>
</feature>
<feature type="modified residue" description="Phosphoserine" evidence="7 8 9">
    <location>
        <position position="662"/>
    </location>
</feature>
<feature type="modified residue" description="Phosphoserine" evidence="9">
    <location>
        <position position="834"/>
    </location>
</feature>
<feature type="modified residue" description="Phosphoserine" evidence="9">
    <location>
        <position position="838"/>
    </location>
</feature>
<feature type="helix" evidence="10">
    <location>
        <begin position="205"/>
        <end position="207"/>
    </location>
</feature>
<feature type="helix" evidence="10">
    <location>
        <begin position="210"/>
        <end position="212"/>
    </location>
</feature>
<feature type="helix" evidence="10">
    <location>
        <begin position="215"/>
        <end position="219"/>
    </location>
</feature>
<feature type="helix" evidence="10">
    <location>
        <begin position="222"/>
        <end position="232"/>
    </location>
</feature>
<feature type="turn" evidence="10">
    <location>
        <begin position="235"/>
        <end position="237"/>
    </location>
</feature>
<feature type="helix" evidence="10">
    <location>
        <begin position="238"/>
        <end position="249"/>
    </location>
</feature>
<feature type="helix" evidence="10">
    <location>
        <begin position="250"/>
        <end position="252"/>
    </location>
</feature>
<feature type="helix" evidence="10">
    <location>
        <begin position="253"/>
        <end position="257"/>
    </location>
</feature>
<feature type="helix" evidence="10">
    <location>
        <begin position="262"/>
        <end position="269"/>
    </location>
</feature>
<feature type="turn" evidence="10">
    <location>
        <begin position="270"/>
        <end position="272"/>
    </location>
</feature>
<feature type="helix" evidence="10">
    <location>
        <begin position="275"/>
        <end position="285"/>
    </location>
</feature>
<feature type="helix" evidence="10">
    <location>
        <begin position="286"/>
        <end position="288"/>
    </location>
</feature>
<feature type="helix" evidence="10">
    <location>
        <begin position="289"/>
        <end position="293"/>
    </location>
</feature>
<feature type="helix" evidence="10">
    <location>
        <begin position="298"/>
        <end position="307"/>
    </location>
</feature>
<feature type="helix" evidence="10">
    <location>
        <begin position="312"/>
        <end position="321"/>
    </location>
</feature>
<feature type="turn" evidence="10">
    <location>
        <begin position="324"/>
        <end position="326"/>
    </location>
</feature>
<feature type="helix" evidence="10">
    <location>
        <begin position="329"/>
        <end position="337"/>
    </location>
</feature>
<feature type="helix" evidence="10">
    <location>
        <begin position="341"/>
        <end position="351"/>
    </location>
</feature>
<feature type="helix" evidence="10">
    <location>
        <begin position="354"/>
        <end position="357"/>
    </location>
</feature>
<feature type="helix" evidence="10">
    <location>
        <begin position="358"/>
        <end position="365"/>
    </location>
</feature>
<feature type="helix" evidence="10">
    <location>
        <begin position="369"/>
        <end position="374"/>
    </location>
</feature>
<feature type="helix" evidence="10">
    <location>
        <begin position="379"/>
        <end position="389"/>
    </location>
</feature>
<feature type="helix" evidence="10">
    <location>
        <begin position="392"/>
        <end position="404"/>
    </location>
</feature>
<feature type="helix" evidence="10">
    <location>
        <begin position="406"/>
        <end position="408"/>
    </location>
</feature>
<feature type="turn" evidence="10">
    <location>
        <begin position="409"/>
        <end position="411"/>
    </location>
</feature>
<feature type="helix" evidence="10">
    <location>
        <begin position="415"/>
        <end position="423"/>
    </location>
</feature>
<feature type="helix" evidence="10">
    <location>
        <begin position="426"/>
        <end position="428"/>
    </location>
</feature>
<feature type="helix" evidence="10">
    <location>
        <begin position="429"/>
        <end position="440"/>
    </location>
</feature>
<feature type="helix" evidence="10">
    <location>
        <begin position="441"/>
        <end position="443"/>
    </location>
</feature>
<feature type="helix" evidence="10">
    <location>
        <begin position="444"/>
        <end position="448"/>
    </location>
</feature>
<feature type="helix" evidence="10">
    <location>
        <begin position="453"/>
        <end position="473"/>
    </location>
</feature>
<feature type="helix" evidence="10">
    <location>
        <begin position="488"/>
        <end position="507"/>
    </location>
</feature>
<feature type="helix" evidence="10">
    <location>
        <begin position="509"/>
        <end position="512"/>
    </location>
</feature>
<feature type="helix" evidence="10">
    <location>
        <begin position="518"/>
        <end position="526"/>
    </location>
</feature>
<feature type="helix" evidence="10">
    <location>
        <begin position="528"/>
        <end position="530"/>
    </location>
</feature>
<feature type="helix" evidence="10">
    <location>
        <begin position="532"/>
        <end position="534"/>
    </location>
</feature>
<feature type="helix" evidence="10">
    <location>
        <begin position="554"/>
        <end position="575"/>
    </location>
</feature>
<feature type="helix" evidence="10">
    <location>
        <begin position="576"/>
        <end position="579"/>
    </location>
</feature>
<feature type="strand" evidence="11">
    <location>
        <begin position="580"/>
        <end position="582"/>
    </location>
</feature>
<feature type="helix" evidence="10">
    <location>
        <begin position="585"/>
        <end position="598"/>
    </location>
</feature>
<proteinExistence type="evidence at protein level"/>
<reference key="1">
    <citation type="journal article" date="1995" name="Yeast">
        <title>The DNA sequence of a 7941 bp fragment of the left arm of chromosome VII of Saccharomyces cerevisiae contains four open reading frames including the multicopy suppressor gene of the pop2 mutation and a putative serine/threonine protein kinase gene.</title>
        <authorList>
            <person name="Coglievina M."/>
            <person name="Bertani I."/>
            <person name="Klima R."/>
            <person name="Zaccaria P."/>
            <person name="Bruschi C.V."/>
        </authorList>
    </citation>
    <scope>NUCLEOTIDE SEQUENCE [GENOMIC DNA]</scope>
    <source>
        <strain>ATCC 96604 / S288c / FY1679</strain>
    </source>
</reference>
<reference key="2">
    <citation type="journal article" date="1997" name="Nature">
        <title>The nucleotide sequence of Saccharomyces cerevisiae chromosome VII.</title>
        <authorList>
            <person name="Tettelin H."/>
            <person name="Agostoni-Carbone M.L."/>
            <person name="Albermann K."/>
            <person name="Albers M."/>
            <person name="Arroyo J."/>
            <person name="Backes U."/>
            <person name="Barreiros T."/>
            <person name="Bertani I."/>
            <person name="Bjourson A.J."/>
            <person name="Brueckner M."/>
            <person name="Bruschi C.V."/>
            <person name="Carignani G."/>
            <person name="Castagnoli L."/>
            <person name="Cerdan E."/>
            <person name="Clemente M.L."/>
            <person name="Coblenz A."/>
            <person name="Coglievina M."/>
            <person name="Coissac E."/>
            <person name="Defoor E."/>
            <person name="Del Bino S."/>
            <person name="Delius H."/>
            <person name="Delneri D."/>
            <person name="de Wergifosse P."/>
            <person name="Dujon B."/>
            <person name="Durand P."/>
            <person name="Entian K.-D."/>
            <person name="Eraso P."/>
            <person name="Escribano V."/>
            <person name="Fabiani L."/>
            <person name="Fartmann B."/>
            <person name="Feroli F."/>
            <person name="Feuermann M."/>
            <person name="Frontali L."/>
            <person name="Garcia-Gonzalez M."/>
            <person name="Garcia-Saez M.I."/>
            <person name="Goffeau A."/>
            <person name="Guerreiro P."/>
            <person name="Hani J."/>
            <person name="Hansen M."/>
            <person name="Hebling U."/>
            <person name="Hernandez K."/>
            <person name="Heumann K."/>
            <person name="Hilger F."/>
            <person name="Hofmann B."/>
            <person name="Indge K.J."/>
            <person name="James C.M."/>
            <person name="Klima R."/>
            <person name="Koetter P."/>
            <person name="Kramer B."/>
            <person name="Kramer W."/>
            <person name="Lauquin G."/>
            <person name="Leuther H."/>
            <person name="Louis E.J."/>
            <person name="Maillier E."/>
            <person name="Marconi A."/>
            <person name="Martegani E."/>
            <person name="Mazon M.J."/>
            <person name="Mazzoni C."/>
            <person name="McReynolds A.D.K."/>
            <person name="Melchioretto P."/>
            <person name="Mewes H.-W."/>
            <person name="Minenkova O."/>
            <person name="Mueller-Auer S."/>
            <person name="Nawrocki A."/>
            <person name="Netter P."/>
            <person name="Neu R."/>
            <person name="Nombela C."/>
            <person name="Oliver S.G."/>
            <person name="Panzeri L."/>
            <person name="Paoluzi S."/>
            <person name="Plevani P."/>
            <person name="Portetelle D."/>
            <person name="Portillo F."/>
            <person name="Potier S."/>
            <person name="Purnelle B."/>
            <person name="Rieger M."/>
            <person name="Riles L."/>
            <person name="Rinaldi T."/>
            <person name="Robben J."/>
            <person name="Rodrigues-Pousada C."/>
            <person name="Rodriguez-Belmonte E."/>
            <person name="Rodriguez-Torres A.M."/>
            <person name="Rose M."/>
            <person name="Ruzzi M."/>
            <person name="Saliola M."/>
            <person name="Sanchez-Perez M."/>
            <person name="Schaefer B."/>
            <person name="Schaefer M."/>
            <person name="Scharfe M."/>
            <person name="Schmidheini T."/>
            <person name="Schreer A."/>
            <person name="Skala J."/>
            <person name="Souciet J.-L."/>
            <person name="Steensma H.Y."/>
            <person name="Talla E."/>
            <person name="Thierry A."/>
            <person name="Vandenbol M."/>
            <person name="van der Aart Q.J.M."/>
            <person name="Van Dyck L."/>
            <person name="Vanoni M."/>
            <person name="Verhasselt P."/>
            <person name="Voet M."/>
            <person name="Volckaert G."/>
            <person name="Wambutt R."/>
            <person name="Watson M.D."/>
            <person name="Weber N."/>
            <person name="Wedler E."/>
            <person name="Wedler H."/>
            <person name="Wipfli P."/>
            <person name="Wolf K."/>
            <person name="Wright L.F."/>
            <person name="Zaccaria P."/>
            <person name="Zimmermann M."/>
            <person name="Zollner A."/>
            <person name="Kleine K."/>
        </authorList>
    </citation>
    <scope>NUCLEOTIDE SEQUENCE [LARGE SCALE GENOMIC DNA]</scope>
    <source>
        <strain>ATCC 204508 / S288c</strain>
    </source>
</reference>
<reference key="3">
    <citation type="journal article" date="2014" name="G3 (Bethesda)">
        <title>The reference genome sequence of Saccharomyces cerevisiae: Then and now.</title>
        <authorList>
            <person name="Engel S.R."/>
            <person name="Dietrich F.S."/>
            <person name="Fisk D.G."/>
            <person name="Binkley G."/>
            <person name="Balakrishnan R."/>
            <person name="Costanzo M.C."/>
            <person name="Dwight S.S."/>
            <person name="Hitz B.C."/>
            <person name="Karra K."/>
            <person name="Nash R.S."/>
            <person name="Weng S."/>
            <person name="Wong E.D."/>
            <person name="Lloyd P."/>
            <person name="Skrzypek M.S."/>
            <person name="Miyasato S.R."/>
            <person name="Simison M."/>
            <person name="Cherry J.M."/>
        </authorList>
    </citation>
    <scope>GENOME REANNOTATION</scope>
    <source>
        <strain>ATCC 204508 / S288c</strain>
    </source>
</reference>
<reference key="4">
    <citation type="journal article" date="1994" name="Mol. Gen. Genet.">
        <title>A new yeast gene, HTR1, required for growth at high temperature, is needed for recovery from mating pheromone-induced G1 arrest.</title>
        <authorList>
            <person name="Kikuchi Y."/>
            <person name="Oka Y."/>
            <person name="Kobayashi M."/>
            <person name="Uesono Y."/>
            <person name="Toh-e A."/>
            <person name="Kikuchi A."/>
        </authorList>
    </citation>
    <scope>NUCLEOTIDE SEQUENCE [GENOMIC DNA] OF 2-859</scope>
    <source>
        <strain>ATCC 70391</strain>
    </source>
</reference>
<reference key="5">
    <citation type="submission" date="1993-12" db="EMBL/GenBank/DDBJ databases">
        <title>Multicopy suppressors of the yeast pop2 mutation.</title>
        <authorList>
            <person name="Sakai A."/>
        </authorList>
    </citation>
    <scope>NUCLEOTIDE SEQUENCE [GENOMIC DNA] OF 2-859</scope>
    <source>
        <strain>ATCC 204508 / S288c</strain>
    </source>
</reference>
<reference key="6">
    <citation type="journal article" date="2000" name="Nucleic Acids Res.">
        <title>Test of intron predictions reveals novel splice sites, alternatively spliced mRNAs and new introns in meiotically regulated genes of yeast.</title>
        <authorList>
            <person name="Davis C.A."/>
            <person name="Grate L."/>
            <person name="Spingola M."/>
            <person name="Ares M. Jr."/>
        </authorList>
    </citation>
    <scope>IDENTIFICATION OF INTRON</scope>
</reference>
<reference key="7">
    <citation type="journal article" date="2001" name="EMBO J.">
        <title>Post-transcriptional regulation through the HO 3'-UTR by Mpt5, a yeast homolog of Pumilio and FBF.</title>
        <authorList>
            <person name="Tadauchi T."/>
            <person name="Matsumoto K."/>
            <person name="Herskowitz I."/>
            <person name="Irie K."/>
        </authorList>
    </citation>
    <scope>FUNCTION</scope>
</reference>
<reference key="8">
    <citation type="journal article" date="2003" name="Nature">
        <title>Global analysis of protein expression in yeast.</title>
        <authorList>
            <person name="Ghaemmaghami S."/>
            <person name="Huh W.-K."/>
            <person name="Bower K."/>
            <person name="Howson R.W."/>
            <person name="Belle A."/>
            <person name="Dephoure N."/>
            <person name="O'Shea E.K."/>
            <person name="Weissman J.S."/>
        </authorList>
    </citation>
    <scope>LEVEL OF PROTEIN EXPRESSION [LARGE SCALE ANALYSIS]</scope>
</reference>
<reference key="9">
    <citation type="journal article" date="2004" name="PLoS Biol.">
        <title>Extensive association of functionally and cytotopically related mRNAs with Puf family RNA-binding proteins in yeast.</title>
        <authorList>
            <person name="Gerber A.P."/>
            <person name="Herschlag D."/>
            <person name="Brown P.O."/>
        </authorList>
    </citation>
    <scope>RNA-BINDING</scope>
    <scope>SUBCELLULAR LOCATION</scope>
</reference>
<reference key="10">
    <citation type="journal article" date="2007" name="J. Proteome Res.">
        <title>Large-scale phosphorylation analysis of alpha-factor-arrested Saccharomyces cerevisiae.</title>
        <authorList>
            <person name="Li X."/>
            <person name="Gerber S.A."/>
            <person name="Rudner A.D."/>
            <person name="Beausoleil S.A."/>
            <person name="Haas W."/>
            <person name="Villen J."/>
            <person name="Elias J.E."/>
            <person name="Gygi S.P."/>
        </authorList>
    </citation>
    <scope>PHOSPHORYLATION [LARGE SCALE ANALYSIS] AT SER-662</scope>
    <scope>IDENTIFICATION BY MASS SPECTROMETRY [LARGE SCALE ANALYSIS]</scope>
    <source>
        <strain>ADR376</strain>
    </source>
</reference>
<reference key="11">
    <citation type="journal article" date="2008" name="Mol. Cell. Proteomics">
        <title>A multidimensional chromatography technology for in-depth phosphoproteome analysis.</title>
        <authorList>
            <person name="Albuquerque C.P."/>
            <person name="Smolka M.B."/>
            <person name="Payne S.H."/>
            <person name="Bafna V."/>
            <person name="Eng J."/>
            <person name="Zhou H."/>
        </authorList>
    </citation>
    <scope>PHOSPHORYLATION [LARGE SCALE ANALYSIS] AT SER-662</scope>
    <scope>IDENTIFICATION BY MASS SPECTROMETRY [LARGE SCALE ANALYSIS]</scope>
</reference>
<reference key="12">
    <citation type="journal article" date="2009" name="Science">
        <title>Global analysis of Cdk1 substrate phosphorylation sites provides insights into evolution.</title>
        <authorList>
            <person name="Holt L.J."/>
            <person name="Tuch B.B."/>
            <person name="Villen J."/>
            <person name="Johnson A.D."/>
            <person name="Gygi S.P."/>
            <person name="Morgan D.O."/>
        </authorList>
    </citation>
    <scope>PHOSPHORYLATION [LARGE SCALE ANALYSIS] AT SER-662; SER-834 AND SER-838</scope>
    <scope>IDENTIFICATION BY MASS SPECTROMETRY [LARGE SCALE ANALYSIS]</scope>
</reference>
<gene>
    <name type="primary">MPT5</name>
    <name type="synonym">HTR1</name>
    <name type="synonym">PUF5</name>
    <name type="ordered locus">YGL178W</name>
    <name type="ORF">BIC834</name>
</gene>
<evidence type="ECO:0000255" key="1">
    <source>
        <dbReference type="PROSITE-ProRule" id="PRU00318"/>
    </source>
</evidence>
<evidence type="ECO:0000256" key="2">
    <source>
        <dbReference type="SAM" id="MobiDB-lite"/>
    </source>
</evidence>
<evidence type="ECO:0000269" key="3">
    <source>
    </source>
</evidence>
<evidence type="ECO:0000269" key="4">
    <source>
    </source>
</evidence>
<evidence type="ECO:0000269" key="5">
    <source>
    </source>
</evidence>
<evidence type="ECO:0000305" key="6"/>
<evidence type="ECO:0007744" key="7">
    <source>
    </source>
</evidence>
<evidence type="ECO:0007744" key="8">
    <source>
    </source>
</evidence>
<evidence type="ECO:0007744" key="9">
    <source>
    </source>
</evidence>
<evidence type="ECO:0007829" key="10">
    <source>
        <dbReference type="PDB" id="5BZ1"/>
    </source>
</evidence>
<evidence type="ECO:0007829" key="11">
    <source>
        <dbReference type="PDB" id="5BZV"/>
    </source>
</evidence>